<gene>
    <name evidence="1" type="primary">ruvC</name>
    <name type="ordered locus">RPA1099</name>
</gene>
<reference key="1">
    <citation type="journal article" date="2004" name="Nat. Biotechnol.">
        <title>Complete genome sequence of the metabolically versatile photosynthetic bacterium Rhodopseudomonas palustris.</title>
        <authorList>
            <person name="Larimer F.W."/>
            <person name="Chain P."/>
            <person name="Hauser L."/>
            <person name="Lamerdin J.E."/>
            <person name="Malfatti S."/>
            <person name="Do L."/>
            <person name="Land M.L."/>
            <person name="Pelletier D.A."/>
            <person name="Beatty J.T."/>
            <person name="Lang A.S."/>
            <person name="Tabita F.R."/>
            <person name="Gibson J.L."/>
            <person name="Hanson T.E."/>
            <person name="Bobst C."/>
            <person name="Torres y Torres J.L."/>
            <person name="Peres C."/>
            <person name="Harrison F.H."/>
            <person name="Gibson J."/>
            <person name="Harwood C.S."/>
        </authorList>
    </citation>
    <scope>NUCLEOTIDE SEQUENCE [LARGE SCALE GENOMIC DNA]</scope>
    <source>
        <strain>ATCC BAA-98 / CGA009</strain>
    </source>
</reference>
<accession>Q6NAT1</accession>
<keyword id="KW-0963">Cytoplasm</keyword>
<keyword id="KW-0227">DNA damage</keyword>
<keyword id="KW-0233">DNA recombination</keyword>
<keyword id="KW-0234">DNA repair</keyword>
<keyword id="KW-0238">DNA-binding</keyword>
<keyword id="KW-0255">Endonuclease</keyword>
<keyword id="KW-0378">Hydrolase</keyword>
<keyword id="KW-0460">Magnesium</keyword>
<keyword id="KW-0479">Metal-binding</keyword>
<keyword id="KW-0540">Nuclease</keyword>
<organism>
    <name type="scientific">Rhodopseudomonas palustris (strain ATCC BAA-98 / CGA009)</name>
    <dbReference type="NCBI Taxonomy" id="258594"/>
    <lineage>
        <taxon>Bacteria</taxon>
        <taxon>Pseudomonadati</taxon>
        <taxon>Pseudomonadota</taxon>
        <taxon>Alphaproteobacteria</taxon>
        <taxon>Hyphomicrobiales</taxon>
        <taxon>Nitrobacteraceae</taxon>
        <taxon>Rhodopseudomonas</taxon>
    </lineage>
</organism>
<dbReference type="EC" id="3.1.21.10" evidence="1"/>
<dbReference type="EMBL" id="BX572596">
    <property type="protein sequence ID" value="CAE26542.1"/>
    <property type="molecule type" value="Genomic_DNA"/>
</dbReference>
<dbReference type="RefSeq" id="WP_011156663.1">
    <property type="nucleotide sequence ID" value="NZ_CP116810.1"/>
</dbReference>
<dbReference type="SMR" id="Q6NAT1"/>
<dbReference type="STRING" id="258594.RPA1099"/>
<dbReference type="GeneID" id="66892120"/>
<dbReference type="eggNOG" id="COG0817">
    <property type="taxonomic scope" value="Bacteria"/>
</dbReference>
<dbReference type="HOGENOM" id="CLU_091257_1_0_5"/>
<dbReference type="PhylomeDB" id="Q6NAT1"/>
<dbReference type="GO" id="GO:0005737">
    <property type="term" value="C:cytoplasm"/>
    <property type="evidence" value="ECO:0007669"/>
    <property type="project" value="UniProtKB-SubCell"/>
</dbReference>
<dbReference type="GO" id="GO:0048476">
    <property type="term" value="C:Holliday junction resolvase complex"/>
    <property type="evidence" value="ECO:0007669"/>
    <property type="project" value="UniProtKB-UniRule"/>
</dbReference>
<dbReference type="GO" id="GO:0008821">
    <property type="term" value="F:crossover junction DNA endonuclease activity"/>
    <property type="evidence" value="ECO:0007669"/>
    <property type="project" value="UniProtKB-UniRule"/>
</dbReference>
<dbReference type="GO" id="GO:0003677">
    <property type="term" value="F:DNA binding"/>
    <property type="evidence" value="ECO:0007669"/>
    <property type="project" value="UniProtKB-KW"/>
</dbReference>
<dbReference type="GO" id="GO:0000287">
    <property type="term" value="F:magnesium ion binding"/>
    <property type="evidence" value="ECO:0007669"/>
    <property type="project" value="UniProtKB-UniRule"/>
</dbReference>
<dbReference type="GO" id="GO:0006310">
    <property type="term" value="P:DNA recombination"/>
    <property type="evidence" value="ECO:0007669"/>
    <property type="project" value="UniProtKB-UniRule"/>
</dbReference>
<dbReference type="GO" id="GO:0006281">
    <property type="term" value="P:DNA repair"/>
    <property type="evidence" value="ECO:0007669"/>
    <property type="project" value="UniProtKB-UniRule"/>
</dbReference>
<dbReference type="CDD" id="cd16962">
    <property type="entry name" value="RuvC"/>
    <property type="match status" value="1"/>
</dbReference>
<dbReference type="FunFam" id="3.30.420.10:FF:000002">
    <property type="entry name" value="Crossover junction endodeoxyribonuclease RuvC"/>
    <property type="match status" value="1"/>
</dbReference>
<dbReference type="Gene3D" id="3.30.420.10">
    <property type="entry name" value="Ribonuclease H-like superfamily/Ribonuclease H"/>
    <property type="match status" value="1"/>
</dbReference>
<dbReference type="HAMAP" id="MF_00034">
    <property type="entry name" value="RuvC"/>
    <property type="match status" value="1"/>
</dbReference>
<dbReference type="InterPro" id="IPR012337">
    <property type="entry name" value="RNaseH-like_sf"/>
</dbReference>
<dbReference type="InterPro" id="IPR036397">
    <property type="entry name" value="RNaseH_sf"/>
</dbReference>
<dbReference type="InterPro" id="IPR020563">
    <property type="entry name" value="X-over_junc_endoDNase_Mg_BS"/>
</dbReference>
<dbReference type="InterPro" id="IPR002176">
    <property type="entry name" value="X-over_junc_endoDNase_RuvC"/>
</dbReference>
<dbReference type="NCBIfam" id="TIGR00228">
    <property type="entry name" value="ruvC"/>
    <property type="match status" value="1"/>
</dbReference>
<dbReference type="PANTHER" id="PTHR30194">
    <property type="entry name" value="CROSSOVER JUNCTION ENDODEOXYRIBONUCLEASE RUVC"/>
    <property type="match status" value="1"/>
</dbReference>
<dbReference type="PANTHER" id="PTHR30194:SF3">
    <property type="entry name" value="CROSSOVER JUNCTION ENDODEOXYRIBONUCLEASE RUVC"/>
    <property type="match status" value="1"/>
</dbReference>
<dbReference type="Pfam" id="PF02075">
    <property type="entry name" value="RuvC"/>
    <property type="match status" value="1"/>
</dbReference>
<dbReference type="PRINTS" id="PR00696">
    <property type="entry name" value="RSOLVASERUVC"/>
</dbReference>
<dbReference type="SUPFAM" id="SSF53098">
    <property type="entry name" value="Ribonuclease H-like"/>
    <property type="match status" value="1"/>
</dbReference>
<dbReference type="PROSITE" id="PS01321">
    <property type="entry name" value="RUVC"/>
    <property type="match status" value="1"/>
</dbReference>
<evidence type="ECO:0000255" key="1">
    <source>
        <dbReference type="HAMAP-Rule" id="MF_00034"/>
    </source>
</evidence>
<sequence length="174" mass="18219">MTAVSIRRPIRILGIDPGLRRTGWGVVDSDGNRLVYVACGSVEPRDTLPLAERLLAIHDGLAKVLAAHAPAEAAVEQTFVNKDGAATLKLGQARGVAMLVPAMHGLLVAEYAPNLVKKTVVGAGHADKTQIQMMLKILLPKADPKTADAADALAIAITHAHHRGAAQRLKAVGA</sequence>
<feature type="chain" id="PRO_0000225171" description="Crossover junction endodeoxyribonuclease RuvC">
    <location>
        <begin position="1"/>
        <end position="174"/>
    </location>
</feature>
<feature type="active site" evidence="1">
    <location>
        <position position="16"/>
    </location>
</feature>
<feature type="active site" evidence="1">
    <location>
        <position position="76"/>
    </location>
</feature>
<feature type="active site" evidence="1">
    <location>
        <position position="148"/>
    </location>
</feature>
<feature type="binding site" evidence="1">
    <location>
        <position position="16"/>
    </location>
    <ligand>
        <name>Mg(2+)</name>
        <dbReference type="ChEBI" id="CHEBI:18420"/>
        <label>1</label>
    </ligand>
</feature>
<feature type="binding site" evidence="1">
    <location>
        <position position="76"/>
    </location>
    <ligand>
        <name>Mg(2+)</name>
        <dbReference type="ChEBI" id="CHEBI:18420"/>
        <label>2</label>
    </ligand>
</feature>
<feature type="binding site" evidence="1">
    <location>
        <position position="148"/>
    </location>
    <ligand>
        <name>Mg(2+)</name>
        <dbReference type="ChEBI" id="CHEBI:18420"/>
        <label>1</label>
    </ligand>
</feature>
<comment type="function">
    <text evidence="1">The RuvA-RuvB-RuvC complex processes Holliday junction (HJ) DNA during genetic recombination and DNA repair. Endonuclease that resolves HJ intermediates. Cleaves cruciform DNA by making single-stranded nicks across the HJ at symmetrical positions within the homologous arms, yielding a 5'-phosphate and a 3'-hydroxyl group; requires a central core of homology in the junction. The consensus cleavage sequence is 5'-(A/T)TT(C/G)-3'. Cleavage occurs on the 3'-side of the TT dinucleotide at the point of strand exchange. HJ branch migration catalyzed by RuvA-RuvB allows RuvC to scan DNA until it finds its consensus sequence, where it cleaves and resolves the cruciform DNA.</text>
</comment>
<comment type="catalytic activity">
    <reaction evidence="1">
        <text>Endonucleolytic cleavage at a junction such as a reciprocal single-stranded crossover between two homologous DNA duplexes (Holliday junction).</text>
        <dbReference type="EC" id="3.1.21.10"/>
    </reaction>
</comment>
<comment type="cofactor">
    <cofactor evidence="1">
        <name>Mg(2+)</name>
        <dbReference type="ChEBI" id="CHEBI:18420"/>
    </cofactor>
    <text evidence="1">Binds 2 Mg(2+) ion per subunit.</text>
</comment>
<comment type="subunit">
    <text evidence="1">Homodimer which binds Holliday junction (HJ) DNA. The HJ becomes 2-fold symmetrical on binding to RuvC with unstacked arms; it has a different conformation from HJ DNA in complex with RuvA. In the full resolvosome a probable DNA-RuvA(4)-RuvB(12)-RuvC(2) complex forms which resolves the HJ.</text>
</comment>
<comment type="subcellular location">
    <subcellularLocation>
        <location evidence="1">Cytoplasm</location>
    </subcellularLocation>
</comment>
<comment type="similarity">
    <text evidence="1">Belongs to the RuvC family.</text>
</comment>
<name>RUVC_RHOPA</name>
<protein>
    <recommendedName>
        <fullName evidence="1">Crossover junction endodeoxyribonuclease RuvC</fullName>
        <ecNumber evidence="1">3.1.21.10</ecNumber>
    </recommendedName>
    <alternativeName>
        <fullName evidence="1">Holliday junction nuclease RuvC</fullName>
    </alternativeName>
    <alternativeName>
        <fullName evidence="1">Holliday junction resolvase RuvC</fullName>
    </alternativeName>
</protein>
<proteinExistence type="inferred from homology"/>